<protein>
    <recommendedName>
        <fullName>Translocator protein BipB</fullName>
    </recommendedName>
</protein>
<keyword id="KW-0175">Coiled coil</keyword>
<keyword id="KW-1043">Host membrane</keyword>
<keyword id="KW-0472">Membrane</keyword>
<keyword id="KW-0964">Secreted</keyword>
<keyword id="KW-0812">Transmembrane</keyword>
<keyword id="KW-1133">Transmembrane helix</keyword>
<keyword id="KW-0843">Virulence</keyword>
<gene>
    <name type="primary">bipB</name>
    <name type="ordered locus">BURPS1106A_A2074</name>
</gene>
<comment type="function">
    <text evidence="1">Plays a role in the bacterium-induced formation of multinucleated giant cell (MNGC), which is formed after host cell fusion, as well as in the intercellular spreading of bacteria and in the induction of apoptosis in macrophages. May act in concert with other effector proteins to induce fusion of host cell membranes (By similarity).</text>
</comment>
<comment type="subcellular location">
    <subcellularLocation>
        <location evidence="1">Secreted</location>
    </subcellularLocation>
    <subcellularLocation>
        <location evidence="1">Host membrane</location>
    </subcellularLocation>
    <text evidence="1">Secreted via the bsa type III secretion system, and probably inserted into host membranes.</text>
</comment>
<comment type="similarity">
    <text evidence="4">Belongs to the SctE/SipB/YopB family.</text>
</comment>
<reference key="1">
    <citation type="journal article" date="2010" name="Genome Biol. Evol.">
        <title>Continuing evolution of Burkholderia mallei through genome reduction and large-scale rearrangements.</title>
        <authorList>
            <person name="Losada L."/>
            <person name="Ronning C.M."/>
            <person name="DeShazer D."/>
            <person name="Woods D."/>
            <person name="Fedorova N."/>
            <person name="Kim H.S."/>
            <person name="Shabalina S.A."/>
            <person name="Pearson T.R."/>
            <person name="Brinkac L."/>
            <person name="Tan P."/>
            <person name="Nandi T."/>
            <person name="Crabtree J."/>
            <person name="Badger J."/>
            <person name="Beckstrom-Sternberg S."/>
            <person name="Saqib M."/>
            <person name="Schutzer S.E."/>
            <person name="Keim P."/>
            <person name="Nierman W.C."/>
        </authorList>
    </citation>
    <scope>NUCLEOTIDE SEQUENCE [LARGE SCALE GENOMIC DNA]</scope>
    <source>
        <strain>1106a</strain>
    </source>
</reference>
<proteinExistence type="inferred from homology"/>
<feature type="chain" id="PRO_0000343990" description="Translocator protein BipB">
    <location>
        <begin position="1"/>
        <end position="620"/>
    </location>
</feature>
<feature type="transmembrane region" description="Helical" evidence="2">
    <location>
        <begin position="355"/>
        <end position="375"/>
    </location>
</feature>
<feature type="transmembrane region" description="Helical" evidence="2">
    <location>
        <begin position="401"/>
        <end position="421"/>
    </location>
</feature>
<feature type="transmembrane region" description="Helical" evidence="2">
    <location>
        <begin position="430"/>
        <end position="450"/>
    </location>
</feature>
<feature type="region of interest" description="Disordered" evidence="3">
    <location>
        <begin position="58"/>
        <end position="95"/>
    </location>
</feature>
<feature type="coiled-coil region" evidence="2">
    <location>
        <begin position="309"/>
        <end position="339"/>
    </location>
</feature>
<feature type="compositionally biased region" description="Basic and acidic residues" evidence="3">
    <location>
        <begin position="66"/>
        <end position="84"/>
    </location>
</feature>
<sequence>MSSGVQGGPAANANAYQTHPLRDAASALGTLSPQAYVDVVSAAQRNFLERMSQLASEQCDAQPAAHDARLDDKPALRAPQERDAPPLGASDTGSRASGAAKLTELLGVLMSVISASSLDELKQRSDIWNQMSKAAQDNLSRLSDAFHRATDEAKAAADAAEQAAAAAKQAGADAKAADAAVDAAQKRYDDAVKQGLPDDRLQSLKAALEQARQQAGDAHGRADALQADATKKLDAASALATQARACEQQVDDAVNQATQQYGASASLRTPQSPRLSGAAELTAVLGKLQELISSGNVKELESKQKLFTEMQAKREAELQKKSDEYQAQVKKAEEMQKTMGCIGKIVGWVITAVSFAAAAFTGGASLALAAVGLALAVGDEISRATTGVSFMDKLMQPVMDAILKPLMEMISSLITKALVACGVDQQKAELAGAILGAVVTGVALVAAAFVGASAVKAVASKVIDAMAGQLTKLMDSAIGKMLVQLIEKFSEKSGLQALGSRTATAMTRMRRAIGVEAKEDGMLLANRFEKAGTVMNVGNQVSQAAGGIVVGVERAKAMGLLADVKEAMYDIKLLGDLLKQAVDAFAEHNRVLAQLMQQMSDAGEMQTSTGKLILRNARAV</sequence>
<name>BIPB_BURP0</name>
<accession>A3P6Z7</accession>
<organism>
    <name type="scientific">Burkholderia pseudomallei (strain 1106a)</name>
    <dbReference type="NCBI Taxonomy" id="357348"/>
    <lineage>
        <taxon>Bacteria</taxon>
        <taxon>Pseudomonadati</taxon>
        <taxon>Pseudomonadota</taxon>
        <taxon>Betaproteobacteria</taxon>
        <taxon>Burkholderiales</taxon>
        <taxon>Burkholderiaceae</taxon>
        <taxon>Burkholderia</taxon>
        <taxon>pseudomallei group</taxon>
    </lineage>
</organism>
<dbReference type="EMBL" id="CP000573">
    <property type="protein sequence ID" value="ABN95436.1"/>
    <property type="molecule type" value="Genomic_DNA"/>
</dbReference>
<dbReference type="RefSeq" id="WP_004537550.1">
    <property type="nucleotide sequence ID" value="NC_009078.1"/>
</dbReference>
<dbReference type="SMR" id="A3P6Z7"/>
<dbReference type="KEGG" id="bpl:BURPS1106A_A2074"/>
<dbReference type="HOGENOM" id="CLU_027418_0_0_4"/>
<dbReference type="Proteomes" id="UP000006738">
    <property type="component" value="Chromosome II"/>
</dbReference>
<dbReference type="GO" id="GO:0005576">
    <property type="term" value="C:extracellular region"/>
    <property type="evidence" value="ECO:0007669"/>
    <property type="project" value="UniProtKB-SubCell"/>
</dbReference>
<dbReference type="GO" id="GO:0033644">
    <property type="term" value="C:host cell membrane"/>
    <property type="evidence" value="ECO:0007669"/>
    <property type="project" value="UniProtKB-SubCell"/>
</dbReference>
<dbReference type="GO" id="GO:0016020">
    <property type="term" value="C:membrane"/>
    <property type="evidence" value="ECO:0007669"/>
    <property type="project" value="UniProtKB-KW"/>
</dbReference>
<dbReference type="Gene3D" id="1.20.120.330">
    <property type="entry name" value="Nucleotidyltransferases domain 2"/>
    <property type="match status" value="2"/>
</dbReference>
<dbReference type="InterPro" id="IPR006972">
    <property type="entry name" value="BipB-like_C"/>
</dbReference>
<dbReference type="InterPro" id="IPR032391">
    <property type="entry name" value="IpaB/BipB/SctE_N"/>
</dbReference>
<dbReference type="InterPro" id="IPR003895">
    <property type="entry name" value="T3SS_SctE/BipB"/>
</dbReference>
<dbReference type="Pfam" id="PF04888">
    <property type="entry name" value="SseC"/>
    <property type="match status" value="1"/>
</dbReference>
<dbReference type="Pfam" id="PF16535">
    <property type="entry name" value="T3SSipB"/>
    <property type="match status" value="1"/>
</dbReference>
<dbReference type="PRINTS" id="PR01375">
    <property type="entry name" value="BACINVASINB"/>
</dbReference>
<evidence type="ECO:0000250" key="1"/>
<evidence type="ECO:0000255" key="2"/>
<evidence type="ECO:0000256" key="3">
    <source>
        <dbReference type="SAM" id="MobiDB-lite"/>
    </source>
</evidence>
<evidence type="ECO:0000305" key="4"/>